<evidence type="ECO:0000250" key="1"/>
<evidence type="ECO:0000305" key="2"/>
<organism>
    <name type="scientific">Aquifex aeolicus (strain VF5)</name>
    <dbReference type="NCBI Taxonomy" id="224324"/>
    <lineage>
        <taxon>Bacteria</taxon>
        <taxon>Pseudomonadati</taxon>
        <taxon>Aquificota</taxon>
        <taxon>Aquificia</taxon>
        <taxon>Aquificales</taxon>
        <taxon>Aquificaceae</taxon>
        <taxon>Aquifex</taxon>
    </lineage>
</organism>
<gene>
    <name type="primary">flhF</name>
    <name type="ordered locus">aq_1214</name>
</gene>
<comment type="function">
    <text evidence="1">Necessary for flagellar biosynthesis. May be involved in translocation of the flagellum (By similarity).</text>
</comment>
<comment type="subcellular location">
    <subcellularLocation>
        <location evidence="1">Cell membrane</location>
        <topology evidence="1">Peripheral membrane protein</topology>
        <orientation evidence="1">Cytoplasmic side</orientation>
    </subcellularLocation>
</comment>
<comment type="similarity">
    <text evidence="2">Belongs to the GTP-binding SRP family.</text>
</comment>
<name>FLHF_AQUAE</name>
<reference key="1">
    <citation type="journal article" date="1998" name="Nature">
        <title>The complete genome of the hyperthermophilic bacterium Aquifex aeolicus.</title>
        <authorList>
            <person name="Deckert G."/>
            <person name="Warren P.V."/>
            <person name="Gaasterland T."/>
            <person name="Young W.G."/>
            <person name="Lenox A.L."/>
            <person name="Graham D.E."/>
            <person name="Overbeek R."/>
            <person name="Snead M.A."/>
            <person name="Keller M."/>
            <person name="Aujay M."/>
            <person name="Huber R."/>
            <person name="Feldman R.A."/>
            <person name="Short J.M."/>
            <person name="Olsen G.J."/>
            <person name="Swanson R.V."/>
        </authorList>
    </citation>
    <scope>NUCLEOTIDE SEQUENCE [LARGE SCALE GENOMIC DNA]</scope>
    <source>
        <strain>VF5</strain>
    </source>
</reference>
<sequence>MKIEKIEVNSLQEAIEIVERRFGENAVILSSRVIRKNRFGFLPIFRKKILEVTVGIREEEDFRKEFERERELIKEIENLKKIVNELINNGEVKGEKIVEKGSDTYAPRVKRYLEKLVIKNISKNIAEKIIQDACGYDIDNKIYDFKDEPYTSLRESIEKNIKLNEEFIQNPPKVVALVGPTGVGKTTTLAKLAHLFKKNKKKVGIISLDCFRVGAFEQLKAFAEVLEVPFKLADSPRAFNIQLLEMDDRDVILVDTAGRSHYDVIRLKELETYFKVSDISVYLTLAANLSELVMYEAIMQFGMFSISGLIFTKLDETPYPGSMVNVAYRTQYPVVCFTMGQSIPEDIVVANYDYLVRLILEDEDEVRPATQLA</sequence>
<accession>O67266</accession>
<keyword id="KW-1005">Bacterial flagellum biogenesis</keyword>
<keyword id="KW-1006">Bacterial flagellum protein export</keyword>
<keyword id="KW-1003">Cell membrane</keyword>
<keyword id="KW-0342">GTP-binding</keyword>
<keyword id="KW-0472">Membrane</keyword>
<keyword id="KW-0547">Nucleotide-binding</keyword>
<keyword id="KW-0653">Protein transport</keyword>
<keyword id="KW-1185">Reference proteome</keyword>
<keyword id="KW-0813">Transport</keyword>
<dbReference type="EMBL" id="AE000657">
    <property type="protein sequence ID" value="AAC07228.1"/>
    <property type="molecule type" value="Genomic_DNA"/>
</dbReference>
<dbReference type="PIR" id="G70404">
    <property type="entry name" value="G70404"/>
</dbReference>
<dbReference type="RefSeq" id="NP_213830.1">
    <property type="nucleotide sequence ID" value="NC_000918.1"/>
</dbReference>
<dbReference type="RefSeq" id="WP_010880768.1">
    <property type="nucleotide sequence ID" value="NC_000918.1"/>
</dbReference>
<dbReference type="SMR" id="O67266"/>
<dbReference type="STRING" id="224324.aq_1214"/>
<dbReference type="EnsemblBacteria" id="AAC07228">
    <property type="protein sequence ID" value="AAC07228"/>
    <property type="gene ID" value="aq_1214"/>
</dbReference>
<dbReference type="KEGG" id="aae:aq_1214"/>
<dbReference type="PATRIC" id="fig|224324.8.peg.944"/>
<dbReference type="eggNOG" id="COG1419">
    <property type="taxonomic scope" value="Bacteria"/>
</dbReference>
<dbReference type="HOGENOM" id="CLU_009301_11_4_0"/>
<dbReference type="InParanoid" id="O67266"/>
<dbReference type="OrthoDB" id="9778554at2"/>
<dbReference type="Proteomes" id="UP000000798">
    <property type="component" value="Chromosome"/>
</dbReference>
<dbReference type="GO" id="GO:0005886">
    <property type="term" value="C:plasma membrane"/>
    <property type="evidence" value="ECO:0000318"/>
    <property type="project" value="GO_Central"/>
</dbReference>
<dbReference type="GO" id="GO:0016887">
    <property type="term" value="F:ATP hydrolysis activity"/>
    <property type="evidence" value="ECO:0007669"/>
    <property type="project" value="InterPro"/>
</dbReference>
<dbReference type="GO" id="GO:0005525">
    <property type="term" value="F:GTP binding"/>
    <property type="evidence" value="ECO:0007669"/>
    <property type="project" value="UniProtKB-KW"/>
</dbReference>
<dbReference type="GO" id="GO:0003924">
    <property type="term" value="F:GTPase activity"/>
    <property type="evidence" value="ECO:0000318"/>
    <property type="project" value="GO_Central"/>
</dbReference>
<dbReference type="GO" id="GO:0005047">
    <property type="term" value="F:signal recognition particle binding"/>
    <property type="evidence" value="ECO:0000318"/>
    <property type="project" value="GO_Central"/>
</dbReference>
<dbReference type="GO" id="GO:0044781">
    <property type="term" value="P:bacterial-type flagellum organization"/>
    <property type="evidence" value="ECO:0007669"/>
    <property type="project" value="UniProtKB-KW"/>
</dbReference>
<dbReference type="GO" id="GO:0006605">
    <property type="term" value="P:protein targeting"/>
    <property type="evidence" value="ECO:0000318"/>
    <property type="project" value="GO_Central"/>
</dbReference>
<dbReference type="GO" id="GO:0015031">
    <property type="term" value="P:protein transport"/>
    <property type="evidence" value="ECO:0007669"/>
    <property type="project" value="UniProtKB-KW"/>
</dbReference>
<dbReference type="GO" id="GO:0006614">
    <property type="term" value="P:SRP-dependent cotranslational protein targeting to membrane"/>
    <property type="evidence" value="ECO:0007669"/>
    <property type="project" value="InterPro"/>
</dbReference>
<dbReference type="CDD" id="cd17873">
    <property type="entry name" value="FlhF"/>
    <property type="match status" value="1"/>
</dbReference>
<dbReference type="FunFam" id="3.40.50.300:FF:000695">
    <property type="entry name" value="Flagellar biosynthesis regulator FlhF"/>
    <property type="match status" value="1"/>
</dbReference>
<dbReference type="Gene3D" id="1.20.120.1380">
    <property type="entry name" value="Flagellar FlhF biosynthesis protein, N domain"/>
    <property type="match status" value="1"/>
</dbReference>
<dbReference type="Gene3D" id="3.40.50.300">
    <property type="entry name" value="P-loop containing nucleotide triphosphate hydrolases"/>
    <property type="match status" value="1"/>
</dbReference>
<dbReference type="InterPro" id="IPR003593">
    <property type="entry name" value="AAA+_ATPase"/>
</dbReference>
<dbReference type="InterPro" id="IPR047040">
    <property type="entry name" value="FlhF__GTPase_dom"/>
</dbReference>
<dbReference type="InterPro" id="IPR027417">
    <property type="entry name" value="P-loop_NTPase"/>
</dbReference>
<dbReference type="InterPro" id="IPR000897">
    <property type="entry name" value="SRP54_GTPase_dom"/>
</dbReference>
<dbReference type="PANTHER" id="PTHR43134:SF3">
    <property type="entry name" value="FLAGELLAR BIOSYNTHESIS PROTEIN FLHF"/>
    <property type="match status" value="1"/>
</dbReference>
<dbReference type="PANTHER" id="PTHR43134">
    <property type="entry name" value="SIGNAL RECOGNITION PARTICLE RECEPTOR SUBUNIT ALPHA"/>
    <property type="match status" value="1"/>
</dbReference>
<dbReference type="Pfam" id="PF00448">
    <property type="entry name" value="SRP54"/>
    <property type="match status" value="1"/>
</dbReference>
<dbReference type="SMART" id="SM00382">
    <property type="entry name" value="AAA"/>
    <property type="match status" value="1"/>
</dbReference>
<dbReference type="SMART" id="SM00962">
    <property type="entry name" value="SRP54"/>
    <property type="match status" value="1"/>
</dbReference>
<dbReference type="SUPFAM" id="SSF52540">
    <property type="entry name" value="P-loop containing nucleoside triphosphate hydrolases"/>
    <property type="match status" value="1"/>
</dbReference>
<protein>
    <recommendedName>
        <fullName>Flagellar biosynthesis protein FlhF</fullName>
    </recommendedName>
    <alternativeName>
        <fullName>Flagella-associated GTP-binding protein</fullName>
    </alternativeName>
</protein>
<feature type="chain" id="PRO_0000101219" description="Flagellar biosynthesis protein FlhF">
    <location>
        <begin position="1"/>
        <end position="373"/>
    </location>
</feature>
<feature type="binding site" evidence="1">
    <location>
        <begin position="179"/>
        <end position="186"/>
    </location>
    <ligand>
        <name>GTP</name>
        <dbReference type="ChEBI" id="CHEBI:37565"/>
    </ligand>
</feature>
<feature type="binding site" evidence="1">
    <location>
        <begin position="255"/>
        <end position="259"/>
    </location>
    <ligand>
        <name>GTP</name>
        <dbReference type="ChEBI" id="CHEBI:37565"/>
    </ligand>
</feature>
<feature type="binding site" evidence="1">
    <location>
        <begin position="312"/>
        <end position="315"/>
    </location>
    <ligand>
        <name>GTP</name>
        <dbReference type="ChEBI" id="CHEBI:37565"/>
    </ligand>
</feature>
<proteinExistence type="inferred from homology"/>